<accession>Q8A5J7</accession>
<reference key="1">
    <citation type="journal article" date="2003" name="Science">
        <title>A genomic view of the human-Bacteroides thetaiotaomicron symbiosis.</title>
        <authorList>
            <person name="Xu J."/>
            <person name="Bjursell M.K."/>
            <person name="Himrod J."/>
            <person name="Deng S."/>
            <person name="Carmichael L.K."/>
            <person name="Chiang H.C."/>
            <person name="Hooper L.V."/>
            <person name="Gordon J.I."/>
        </authorList>
    </citation>
    <scope>NUCLEOTIDE SEQUENCE [LARGE SCALE GENOMIC DNA]</scope>
    <source>
        <strain>ATCC 29148 / DSM 2079 / JCM 5827 / CCUG 10774 / NCTC 10582 / VPI-5482 / E50</strain>
    </source>
</reference>
<name>PYRH_BACTN</name>
<protein>
    <recommendedName>
        <fullName evidence="1">Uridylate kinase</fullName>
        <shortName evidence="1">UK</shortName>
        <ecNumber evidence="1">2.7.4.22</ecNumber>
    </recommendedName>
    <alternativeName>
        <fullName evidence="1">Uridine monophosphate kinase</fullName>
        <shortName evidence="1">UMP kinase</shortName>
        <shortName evidence="1">UMPK</shortName>
    </alternativeName>
</protein>
<keyword id="KW-0067">ATP-binding</keyword>
<keyword id="KW-0963">Cytoplasm</keyword>
<keyword id="KW-0418">Kinase</keyword>
<keyword id="KW-0547">Nucleotide-binding</keyword>
<keyword id="KW-0665">Pyrimidine biosynthesis</keyword>
<keyword id="KW-1185">Reference proteome</keyword>
<keyword id="KW-0808">Transferase</keyword>
<gene>
    <name evidence="1" type="primary">pyrH</name>
    <name type="ordered locus">BT_2242</name>
</gene>
<comment type="function">
    <text evidence="1">Catalyzes the reversible phosphorylation of UMP to UDP.</text>
</comment>
<comment type="catalytic activity">
    <reaction evidence="1">
        <text>UMP + ATP = UDP + ADP</text>
        <dbReference type="Rhea" id="RHEA:24400"/>
        <dbReference type="ChEBI" id="CHEBI:30616"/>
        <dbReference type="ChEBI" id="CHEBI:57865"/>
        <dbReference type="ChEBI" id="CHEBI:58223"/>
        <dbReference type="ChEBI" id="CHEBI:456216"/>
        <dbReference type="EC" id="2.7.4.22"/>
    </reaction>
</comment>
<comment type="activity regulation">
    <text evidence="1">Inhibited by UTP.</text>
</comment>
<comment type="pathway">
    <text evidence="1">Pyrimidine metabolism; CTP biosynthesis via de novo pathway; UDP from UMP (UMPK route): step 1/1.</text>
</comment>
<comment type="subunit">
    <text evidence="1">Homohexamer.</text>
</comment>
<comment type="subcellular location">
    <subcellularLocation>
        <location evidence="1">Cytoplasm</location>
    </subcellularLocation>
</comment>
<comment type="similarity">
    <text evidence="1">Belongs to the UMP kinase family.</text>
</comment>
<sequence length="236" mass="25549">MAKYKRILLKLSGESLMGEKQYGIDEKRLAEYAAQIKEIHEQGVQIGIVIGGGNIFRGLSGANKGFDRVKGDQMGMLATVINSLALSSALVAAGVKARVLTAVRMEPIGEFYSKWKAIECMENGEIVIMSGGTGNPFFTTDTGSSLRGIEIEADVMLKGTRVDGIYTADPEKDPTATKFSDITYDEVLKRGLKVMDLTATCMCKENNLPIVVFDMDTVGNLKKVISGEEIGTVVHN</sequence>
<evidence type="ECO:0000255" key="1">
    <source>
        <dbReference type="HAMAP-Rule" id="MF_01220"/>
    </source>
</evidence>
<proteinExistence type="inferred from homology"/>
<organism>
    <name type="scientific">Bacteroides thetaiotaomicron (strain ATCC 29148 / DSM 2079 / JCM 5827 / CCUG 10774 / NCTC 10582 / VPI-5482 / E50)</name>
    <dbReference type="NCBI Taxonomy" id="226186"/>
    <lineage>
        <taxon>Bacteria</taxon>
        <taxon>Pseudomonadati</taxon>
        <taxon>Bacteroidota</taxon>
        <taxon>Bacteroidia</taxon>
        <taxon>Bacteroidales</taxon>
        <taxon>Bacteroidaceae</taxon>
        <taxon>Bacteroides</taxon>
    </lineage>
</organism>
<feature type="chain" id="PRO_1000053892" description="Uridylate kinase">
    <location>
        <begin position="1"/>
        <end position="236"/>
    </location>
</feature>
<feature type="binding site" evidence="1">
    <location>
        <begin position="10"/>
        <end position="13"/>
    </location>
    <ligand>
        <name>ATP</name>
        <dbReference type="ChEBI" id="CHEBI:30616"/>
    </ligand>
</feature>
<feature type="binding site" evidence="1">
    <location>
        <position position="52"/>
    </location>
    <ligand>
        <name>UMP</name>
        <dbReference type="ChEBI" id="CHEBI:57865"/>
    </ligand>
</feature>
<feature type="binding site" evidence="1">
    <location>
        <position position="53"/>
    </location>
    <ligand>
        <name>ATP</name>
        <dbReference type="ChEBI" id="CHEBI:30616"/>
    </ligand>
</feature>
<feature type="binding site" evidence="1">
    <location>
        <position position="57"/>
    </location>
    <ligand>
        <name>ATP</name>
        <dbReference type="ChEBI" id="CHEBI:30616"/>
    </ligand>
</feature>
<feature type="binding site" evidence="1">
    <location>
        <position position="72"/>
    </location>
    <ligand>
        <name>UMP</name>
        <dbReference type="ChEBI" id="CHEBI:57865"/>
    </ligand>
</feature>
<feature type="binding site" evidence="1">
    <location>
        <begin position="133"/>
        <end position="140"/>
    </location>
    <ligand>
        <name>UMP</name>
        <dbReference type="ChEBI" id="CHEBI:57865"/>
    </ligand>
</feature>
<feature type="binding site" evidence="1">
    <location>
        <position position="160"/>
    </location>
    <ligand>
        <name>ATP</name>
        <dbReference type="ChEBI" id="CHEBI:30616"/>
    </ligand>
</feature>
<feature type="binding site" evidence="1">
    <location>
        <position position="166"/>
    </location>
    <ligand>
        <name>ATP</name>
        <dbReference type="ChEBI" id="CHEBI:30616"/>
    </ligand>
</feature>
<feature type="binding site" evidence="1">
    <location>
        <position position="169"/>
    </location>
    <ligand>
        <name>ATP</name>
        <dbReference type="ChEBI" id="CHEBI:30616"/>
    </ligand>
</feature>
<dbReference type="EC" id="2.7.4.22" evidence="1"/>
<dbReference type="EMBL" id="AE015928">
    <property type="protein sequence ID" value="AAO77349.1"/>
    <property type="molecule type" value="Genomic_DNA"/>
</dbReference>
<dbReference type="RefSeq" id="NP_811155.1">
    <property type="nucleotide sequence ID" value="NC_004663.1"/>
</dbReference>
<dbReference type="RefSeq" id="WP_008759596.1">
    <property type="nucleotide sequence ID" value="NZ_UYXG01000020.1"/>
</dbReference>
<dbReference type="SMR" id="Q8A5J7"/>
<dbReference type="FunCoup" id="Q8A5J7">
    <property type="interactions" value="569"/>
</dbReference>
<dbReference type="STRING" id="226186.BT_2242"/>
<dbReference type="PaxDb" id="226186-BT_2242"/>
<dbReference type="EnsemblBacteria" id="AAO77349">
    <property type="protein sequence ID" value="AAO77349"/>
    <property type="gene ID" value="BT_2242"/>
</dbReference>
<dbReference type="GeneID" id="60923411"/>
<dbReference type="KEGG" id="bth:BT_2242"/>
<dbReference type="PATRIC" id="fig|226186.12.peg.2307"/>
<dbReference type="eggNOG" id="COG0528">
    <property type="taxonomic scope" value="Bacteria"/>
</dbReference>
<dbReference type="HOGENOM" id="CLU_033861_0_0_10"/>
<dbReference type="InParanoid" id="Q8A5J7"/>
<dbReference type="OrthoDB" id="9807458at2"/>
<dbReference type="UniPathway" id="UPA00159">
    <property type="reaction ID" value="UER00275"/>
</dbReference>
<dbReference type="Proteomes" id="UP000001414">
    <property type="component" value="Chromosome"/>
</dbReference>
<dbReference type="GO" id="GO:0005737">
    <property type="term" value="C:cytoplasm"/>
    <property type="evidence" value="ECO:0007669"/>
    <property type="project" value="UniProtKB-SubCell"/>
</dbReference>
<dbReference type="GO" id="GO:0005524">
    <property type="term" value="F:ATP binding"/>
    <property type="evidence" value="ECO:0007669"/>
    <property type="project" value="UniProtKB-KW"/>
</dbReference>
<dbReference type="GO" id="GO:0033862">
    <property type="term" value="F:UMP kinase activity"/>
    <property type="evidence" value="ECO:0000318"/>
    <property type="project" value="GO_Central"/>
</dbReference>
<dbReference type="GO" id="GO:0044210">
    <property type="term" value="P:'de novo' CTP biosynthetic process"/>
    <property type="evidence" value="ECO:0007669"/>
    <property type="project" value="UniProtKB-UniRule"/>
</dbReference>
<dbReference type="GO" id="GO:0006225">
    <property type="term" value="P:UDP biosynthetic process"/>
    <property type="evidence" value="ECO:0000318"/>
    <property type="project" value="GO_Central"/>
</dbReference>
<dbReference type="CDD" id="cd04254">
    <property type="entry name" value="AAK_UMPK-PyrH-Ec"/>
    <property type="match status" value="1"/>
</dbReference>
<dbReference type="FunFam" id="3.40.1160.10:FF:000001">
    <property type="entry name" value="Uridylate kinase"/>
    <property type="match status" value="1"/>
</dbReference>
<dbReference type="Gene3D" id="3.40.1160.10">
    <property type="entry name" value="Acetylglutamate kinase-like"/>
    <property type="match status" value="1"/>
</dbReference>
<dbReference type="HAMAP" id="MF_01220_B">
    <property type="entry name" value="PyrH_B"/>
    <property type="match status" value="1"/>
</dbReference>
<dbReference type="InterPro" id="IPR036393">
    <property type="entry name" value="AceGlu_kinase-like_sf"/>
</dbReference>
<dbReference type="InterPro" id="IPR001048">
    <property type="entry name" value="Asp/Glu/Uridylate_kinase"/>
</dbReference>
<dbReference type="InterPro" id="IPR011817">
    <property type="entry name" value="Uridylate_kinase"/>
</dbReference>
<dbReference type="InterPro" id="IPR015963">
    <property type="entry name" value="Uridylate_kinase_bac"/>
</dbReference>
<dbReference type="NCBIfam" id="TIGR02075">
    <property type="entry name" value="pyrH_bact"/>
    <property type="match status" value="1"/>
</dbReference>
<dbReference type="PANTHER" id="PTHR42833">
    <property type="entry name" value="URIDYLATE KINASE"/>
    <property type="match status" value="1"/>
</dbReference>
<dbReference type="PANTHER" id="PTHR42833:SF4">
    <property type="entry name" value="URIDYLATE KINASE PUMPKIN, CHLOROPLASTIC"/>
    <property type="match status" value="1"/>
</dbReference>
<dbReference type="Pfam" id="PF00696">
    <property type="entry name" value="AA_kinase"/>
    <property type="match status" value="1"/>
</dbReference>
<dbReference type="PIRSF" id="PIRSF005650">
    <property type="entry name" value="Uridylate_kin"/>
    <property type="match status" value="1"/>
</dbReference>
<dbReference type="SUPFAM" id="SSF53633">
    <property type="entry name" value="Carbamate kinase-like"/>
    <property type="match status" value="1"/>
</dbReference>